<reference key="1">
    <citation type="journal article" date="2008" name="Antimicrob. Agents Chemother.">
        <title>Whole-genome pyrosequencing of an epidemic multidrug-resistant Acinetobacter baumannii strain belonging to the European clone II group.</title>
        <authorList>
            <person name="Iacono M."/>
            <person name="Villa L."/>
            <person name="Fortini D."/>
            <person name="Bordoni R."/>
            <person name="Imperi F."/>
            <person name="Bonnal R.J."/>
            <person name="Sicheritz-Ponten T."/>
            <person name="De Bellis G."/>
            <person name="Visca P."/>
            <person name="Cassone A."/>
            <person name="Carattoli A."/>
        </authorList>
    </citation>
    <scope>NUCLEOTIDE SEQUENCE [LARGE SCALE GENOMIC DNA]</scope>
    <source>
        <strain>ACICU</strain>
    </source>
</reference>
<comment type="function">
    <text evidence="1">IGPS catalyzes the conversion of PRFAR and glutamine to IGP, AICAR and glutamate. The HisF subunit catalyzes the cyclization activity that produces IGP and AICAR from PRFAR using the ammonia provided by the HisH subunit.</text>
</comment>
<comment type="catalytic activity">
    <reaction evidence="1">
        <text>5-[(5-phospho-1-deoxy-D-ribulos-1-ylimino)methylamino]-1-(5-phospho-beta-D-ribosyl)imidazole-4-carboxamide + L-glutamine = D-erythro-1-(imidazol-4-yl)glycerol 3-phosphate + 5-amino-1-(5-phospho-beta-D-ribosyl)imidazole-4-carboxamide + L-glutamate + H(+)</text>
        <dbReference type="Rhea" id="RHEA:24793"/>
        <dbReference type="ChEBI" id="CHEBI:15378"/>
        <dbReference type="ChEBI" id="CHEBI:29985"/>
        <dbReference type="ChEBI" id="CHEBI:58278"/>
        <dbReference type="ChEBI" id="CHEBI:58359"/>
        <dbReference type="ChEBI" id="CHEBI:58475"/>
        <dbReference type="ChEBI" id="CHEBI:58525"/>
        <dbReference type="EC" id="4.3.2.10"/>
    </reaction>
</comment>
<comment type="pathway">
    <text evidence="1">Amino-acid biosynthesis; L-histidine biosynthesis; L-histidine from 5-phospho-alpha-D-ribose 1-diphosphate: step 5/9.</text>
</comment>
<comment type="subunit">
    <text evidence="1">Heterodimer of HisH and HisF.</text>
</comment>
<comment type="subcellular location">
    <subcellularLocation>
        <location evidence="1">Cytoplasm</location>
    </subcellularLocation>
</comment>
<comment type="similarity">
    <text evidence="1">Belongs to the HisA/HisF family.</text>
</comment>
<keyword id="KW-0028">Amino-acid biosynthesis</keyword>
<keyword id="KW-0963">Cytoplasm</keyword>
<keyword id="KW-0368">Histidine biosynthesis</keyword>
<keyword id="KW-0456">Lyase</keyword>
<accession>B2I0P3</accession>
<dbReference type="EC" id="4.3.2.10" evidence="1"/>
<dbReference type="EMBL" id="CP000863">
    <property type="protein sequence ID" value="ACC58749.1"/>
    <property type="molecule type" value="Genomic_DNA"/>
</dbReference>
<dbReference type="RefSeq" id="WP_000880078.1">
    <property type="nucleotide sequence ID" value="NZ_CP031380.1"/>
</dbReference>
<dbReference type="SMR" id="B2I0P3"/>
<dbReference type="GeneID" id="92895482"/>
<dbReference type="KEGG" id="abc:ACICU_03440"/>
<dbReference type="HOGENOM" id="CLU_048577_4_0_6"/>
<dbReference type="UniPathway" id="UPA00031">
    <property type="reaction ID" value="UER00010"/>
</dbReference>
<dbReference type="Proteomes" id="UP000008839">
    <property type="component" value="Chromosome"/>
</dbReference>
<dbReference type="GO" id="GO:0005737">
    <property type="term" value="C:cytoplasm"/>
    <property type="evidence" value="ECO:0007669"/>
    <property type="project" value="UniProtKB-SubCell"/>
</dbReference>
<dbReference type="GO" id="GO:0000107">
    <property type="term" value="F:imidazoleglycerol-phosphate synthase activity"/>
    <property type="evidence" value="ECO:0007669"/>
    <property type="project" value="UniProtKB-UniRule"/>
</dbReference>
<dbReference type="GO" id="GO:0016829">
    <property type="term" value="F:lyase activity"/>
    <property type="evidence" value="ECO:0007669"/>
    <property type="project" value="UniProtKB-KW"/>
</dbReference>
<dbReference type="GO" id="GO:0000105">
    <property type="term" value="P:L-histidine biosynthetic process"/>
    <property type="evidence" value="ECO:0007669"/>
    <property type="project" value="UniProtKB-UniRule"/>
</dbReference>
<dbReference type="CDD" id="cd04731">
    <property type="entry name" value="HisF"/>
    <property type="match status" value="1"/>
</dbReference>
<dbReference type="FunFam" id="3.20.20.70:FF:000006">
    <property type="entry name" value="Imidazole glycerol phosphate synthase subunit HisF"/>
    <property type="match status" value="1"/>
</dbReference>
<dbReference type="Gene3D" id="3.20.20.70">
    <property type="entry name" value="Aldolase class I"/>
    <property type="match status" value="1"/>
</dbReference>
<dbReference type="HAMAP" id="MF_01013">
    <property type="entry name" value="HisF"/>
    <property type="match status" value="1"/>
</dbReference>
<dbReference type="InterPro" id="IPR013785">
    <property type="entry name" value="Aldolase_TIM"/>
</dbReference>
<dbReference type="InterPro" id="IPR006062">
    <property type="entry name" value="His_biosynth"/>
</dbReference>
<dbReference type="InterPro" id="IPR004651">
    <property type="entry name" value="HisF"/>
</dbReference>
<dbReference type="InterPro" id="IPR050064">
    <property type="entry name" value="IGPS_HisA/HisF"/>
</dbReference>
<dbReference type="InterPro" id="IPR011060">
    <property type="entry name" value="RibuloseP-bd_barrel"/>
</dbReference>
<dbReference type="NCBIfam" id="TIGR00735">
    <property type="entry name" value="hisF"/>
    <property type="match status" value="1"/>
</dbReference>
<dbReference type="PANTHER" id="PTHR21235:SF2">
    <property type="entry name" value="IMIDAZOLE GLYCEROL PHOSPHATE SYNTHASE HISHF"/>
    <property type="match status" value="1"/>
</dbReference>
<dbReference type="PANTHER" id="PTHR21235">
    <property type="entry name" value="IMIDAZOLE GLYCEROL PHOSPHATE SYNTHASE SUBUNIT HISF/H IGP SYNTHASE SUBUNIT HISF/H"/>
    <property type="match status" value="1"/>
</dbReference>
<dbReference type="Pfam" id="PF00977">
    <property type="entry name" value="His_biosynth"/>
    <property type="match status" value="1"/>
</dbReference>
<dbReference type="SUPFAM" id="SSF51366">
    <property type="entry name" value="Ribulose-phoshate binding barrel"/>
    <property type="match status" value="1"/>
</dbReference>
<name>HIS6_ACIBC</name>
<evidence type="ECO:0000255" key="1">
    <source>
        <dbReference type="HAMAP-Rule" id="MF_01013"/>
    </source>
</evidence>
<organism>
    <name type="scientific">Acinetobacter baumannii (strain ACICU)</name>
    <dbReference type="NCBI Taxonomy" id="405416"/>
    <lineage>
        <taxon>Bacteria</taxon>
        <taxon>Pseudomonadati</taxon>
        <taxon>Pseudomonadota</taxon>
        <taxon>Gammaproteobacteria</taxon>
        <taxon>Moraxellales</taxon>
        <taxon>Moraxellaceae</taxon>
        <taxon>Acinetobacter</taxon>
        <taxon>Acinetobacter calcoaceticus/baumannii complex</taxon>
    </lineage>
</organism>
<proteinExistence type="inferred from homology"/>
<gene>
    <name evidence="1" type="primary">hisF</name>
    <name type="ordered locus">ACICU_03440</name>
</gene>
<protein>
    <recommendedName>
        <fullName evidence="1">Imidazole glycerol phosphate synthase subunit HisF</fullName>
        <ecNumber evidence="1">4.3.2.10</ecNumber>
    </recommendedName>
    <alternativeName>
        <fullName evidence="1">IGP synthase cyclase subunit</fullName>
    </alternativeName>
    <alternativeName>
        <fullName evidence="1">IGP synthase subunit HisF</fullName>
    </alternativeName>
    <alternativeName>
        <fullName evidence="1">ImGP synthase subunit HisF</fullName>
        <shortName evidence="1">IGPS subunit HisF</shortName>
    </alternativeName>
</protein>
<feature type="chain" id="PRO_1000134954" description="Imidazole glycerol phosphate synthase subunit HisF">
    <location>
        <begin position="1"/>
        <end position="252"/>
    </location>
</feature>
<feature type="active site" evidence="1">
    <location>
        <position position="11"/>
    </location>
</feature>
<feature type="active site" evidence="1">
    <location>
        <position position="130"/>
    </location>
</feature>
<sequence length="252" mass="27186">MLAKRIIPCLDVDNGRVVKGVQFLDIRDAGDPVEVARRYNEQGADEITFLDITATHHGRDTTYRTVERMAETVFVPLTVGGGVRKVEDIRALLNAGADKVSINSAAVFNPEFVQEASQHFGAQCIVVAIDAKKTGDNKWEIFTHGGRKPTGIDAIEWAVKMADYGAGELLITSMDADGTKAGYDIALMRAINDRVTIPTIASGGVGNLQHLADGILQGGADAVLAASIFHFGQYTIPEAKQYLAEQGIEMRL</sequence>